<evidence type="ECO:0000255" key="1">
    <source>
        <dbReference type="HAMAP-Rule" id="MF_00238"/>
    </source>
</evidence>
<name>KCY_ALKMQ</name>
<proteinExistence type="inferred from homology"/>
<comment type="catalytic activity">
    <reaction evidence="1">
        <text>CMP + ATP = CDP + ADP</text>
        <dbReference type="Rhea" id="RHEA:11600"/>
        <dbReference type="ChEBI" id="CHEBI:30616"/>
        <dbReference type="ChEBI" id="CHEBI:58069"/>
        <dbReference type="ChEBI" id="CHEBI:60377"/>
        <dbReference type="ChEBI" id="CHEBI:456216"/>
        <dbReference type="EC" id="2.7.4.25"/>
    </reaction>
</comment>
<comment type="catalytic activity">
    <reaction evidence="1">
        <text>dCMP + ATP = dCDP + ADP</text>
        <dbReference type="Rhea" id="RHEA:25094"/>
        <dbReference type="ChEBI" id="CHEBI:30616"/>
        <dbReference type="ChEBI" id="CHEBI:57566"/>
        <dbReference type="ChEBI" id="CHEBI:58593"/>
        <dbReference type="ChEBI" id="CHEBI:456216"/>
        <dbReference type="EC" id="2.7.4.25"/>
    </reaction>
</comment>
<comment type="subcellular location">
    <subcellularLocation>
        <location evidence="1">Cytoplasm</location>
    </subcellularLocation>
</comment>
<comment type="similarity">
    <text evidence="1">Belongs to the cytidylate kinase family. Type 1 subfamily.</text>
</comment>
<feature type="chain" id="PRO_1000119004" description="Cytidylate kinase">
    <location>
        <begin position="1"/>
        <end position="220"/>
    </location>
</feature>
<feature type="binding site" evidence="1">
    <location>
        <begin position="10"/>
        <end position="18"/>
    </location>
    <ligand>
        <name>ATP</name>
        <dbReference type="ChEBI" id="CHEBI:30616"/>
    </ligand>
</feature>
<gene>
    <name evidence="1" type="primary">cmk</name>
    <name type="ordered locus">Amet_2627</name>
</gene>
<reference key="1">
    <citation type="journal article" date="2016" name="Genome Announc.">
        <title>Complete genome sequence of Alkaliphilus metalliredigens strain QYMF, an alkaliphilic and metal-reducing bacterium isolated from borax-contaminated leachate ponds.</title>
        <authorList>
            <person name="Hwang C."/>
            <person name="Copeland A."/>
            <person name="Lucas S."/>
            <person name="Lapidus A."/>
            <person name="Barry K."/>
            <person name="Detter J.C."/>
            <person name="Glavina Del Rio T."/>
            <person name="Hammon N."/>
            <person name="Israni S."/>
            <person name="Dalin E."/>
            <person name="Tice H."/>
            <person name="Pitluck S."/>
            <person name="Chertkov O."/>
            <person name="Brettin T."/>
            <person name="Bruce D."/>
            <person name="Han C."/>
            <person name="Schmutz J."/>
            <person name="Larimer F."/>
            <person name="Land M.L."/>
            <person name="Hauser L."/>
            <person name="Kyrpides N."/>
            <person name="Mikhailova N."/>
            <person name="Ye Q."/>
            <person name="Zhou J."/>
            <person name="Richardson P."/>
            <person name="Fields M.W."/>
        </authorList>
    </citation>
    <scope>NUCLEOTIDE SEQUENCE [LARGE SCALE GENOMIC DNA]</scope>
    <source>
        <strain>QYMF</strain>
    </source>
</reference>
<protein>
    <recommendedName>
        <fullName evidence="1">Cytidylate kinase</fullName>
        <shortName evidence="1">CK</shortName>
        <ecNumber evidence="1">2.7.4.25</ecNumber>
    </recommendedName>
    <alternativeName>
        <fullName evidence="1">Cytidine monophosphate kinase</fullName>
        <shortName evidence="1">CMP kinase</shortName>
    </alternativeName>
</protein>
<organism>
    <name type="scientific">Alkaliphilus metalliredigens (strain QYMF)</name>
    <dbReference type="NCBI Taxonomy" id="293826"/>
    <lineage>
        <taxon>Bacteria</taxon>
        <taxon>Bacillati</taxon>
        <taxon>Bacillota</taxon>
        <taxon>Clostridia</taxon>
        <taxon>Peptostreptococcales</taxon>
        <taxon>Natronincolaceae</taxon>
        <taxon>Alkaliphilus</taxon>
    </lineage>
</organism>
<dbReference type="EC" id="2.7.4.25" evidence="1"/>
<dbReference type="EMBL" id="CP000724">
    <property type="protein sequence ID" value="ABR48779.1"/>
    <property type="molecule type" value="Genomic_DNA"/>
</dbReference>
<dbReference type="RefSeq" id="WP_012063753.1">
    <property type="nucleotide sequence ID" value="NC_009633.1"/>
</dbReference>
<dbReference type="SMR" id="A6TRG1"/>
<dbReference type="STRING" id="293826.Amet_2627"/>
<dbReference type="KEGG" id="amt:Amet_2627"/>
<dbReference type="eggNOG" id="COG0283">
    <property type="taxonomic scope" value="Bacteria"/>
</dbReference>
<dbReference type="HOGENOM" id="CLU_079959_0_2_9"/>
<dbReference type="OrthoDB" id="9807434at2"/>
<dbReference type="Proteomes" id="UP000001572">
    <property type="component" value="Chromosome"/>
</dbReference>
<dbReference type="GO" id="GO:0005829">
    <property type="term" value="C:cytosol"/>
    <property type="evidence" value="ECO:0007669"/>
    <property type="project" value="TreeGrafter"/>
</dbReference>
<dbReference type="GO" id="GO:0005524">
    <property type="term" value="F:ATP binding"/>
    <property type="evidence" value="ECO:0007669"/>
    <property type="project" value="UniProtKB-UniRule"/>
</dbReference>
<dbReference type="GO" id="GO:0036430">
    <property type="term" value="F:CMP kinase activity"/>
    <property type="evidence" value="ECO:0007669"/>
    <property type="project" value="RHEA"/>
</dbReference>
<dbReference type="GO" id="GO:0036431">
    <property type="term" value="F:dCMP kinase activity"/>
    <property type="evidence" value="ECO:0007669"/>
    <property type="project" value="RHEA"/>
</dbReference>
<dbReference type="GO" id="GO:0015949">
    <property type="term" value="P:nucleobase-containing small molecule interconversion"/>
    <property type="evidence" value="ECO:0007669"/>
    <property type="project" value="TreeGrafter"/>
</dbReference>
<dbReference type="GO" id="GO:0006220">
    <property type="term" value="P:pyrimidine nucleotide metabolic process"/>
    <property type="evidence" value="ECO:0007669"/>
    <property type="project" value="UniProtKB-UniRule"/>
</dbReference>
<dbReference type="CDD" id="cd02020">
    <property type="entry name" value="CMPK"/>
    <property type="match status" value="1"/>
</dbReference>
<dbReference type="Gene3D" id="3.40.50.300">
    <property type="entry name" value="P-loop containing nucleotide triphosphate hydrolases"/>
    <property type="match status" value="1"/>
</dbReference>
<dbReference type="HAMAP" id="MF_00238">
    <property type="entry name" value="Cytidyl_kinase_type1"/>
    <property type="match status" value="1"/>
</dbReference>
<dbReference type="InterPro" id="IPR003136">
    <property type="entry name" value="Cytidylate_kin"/>
</dbReference>
<dbReference type="InterPro" id="IPR011994">
    <property type="entry name" value="Cytidylate_kinase_dom"/>
</dbReference>
<dbReference type="InterPro" id="IPR027417">
    <property type="entry name" value="P-loop_NTPase"/>
</dbReference>
<dbReference type="NCBIfam" id="TIGR00017">
    <property type="entry name" value="cmk"/>
    <property type="match status" value="1"/>
</dbReference>
<dbReference type="PANTHER" id="PTHR21299:SF2">
    <property type="entry name" value="CYTIDYLATE KINASE"/>
    <property type="match status" value="1"/>
</dbReference>
<dbReference type="PANTHER" id="PTHR21299">
    <property type="entry name" value="CYTIDYLATE KINASE/PANTOATE-BETA-ALANINE LIGASE"/>
    <property type="match status" value="1"/>
</dbReference>
<dbReference type="Pfam" id="PF02224">
    <property type="entry name" value="Cytidylate_kin"/>
    <property type="match status" value="1"/>
</dbReference>
<dbReference type="SUPFAM" id="SSF52540">
    <property type="entry name" value="P-loop containing nucleoside triphosphate hydrolases"/>
    <property type="match status" value="1"/>
</dbReference>
<sequence>MTFKQIAIDGPAGAGKSTVAKKLAALLGYTYVDSGAMYRALTYWALKNDINIHNVEAIVNLCTSIHITFINQDIAVNNQIVNTEIRSPEVNNNVSHIAKIPEVRKHLVSLQKCIALSQNVIMDGRDIGTHVLPDADIKVFLTASTQERAQRRYIELVEKGIQTSLMEVEQGIIQRDQMDSKRQYAPLTQADDAVVIDSTGKSIDAIVEEVLRIFNGKERG</sequence>
<keyword id="KW-0067">ATP-binding</keyword>
<keyword id="KW-0963">Cytoplasm</keyword>
<keyword id="KW-0418">Kinase</keyword>
<keyword id="KW-0547">Nucleotide-binding</keyword>
<keyword id="KW-1185">Reference proteome</keyword>
<keyword id="KW-0808">Transferase</keyword>
<accession>A6TRG1</accession>